<comment type="function">
    <molecule>Gag polyprotein</molecule>
    <text evidence="5">Mediates, with Gag-Pol polyprotein, the essential events in virion assembly, including binding the plasma membrane, making the protein-protein interactions necessary to create spherical particles, recruiting the viral Env proteins, and packaging the genomic RNA via direct interactions with the RNA packaging sequence (Psi).</text>
</comment>
<comment type="function">
    <molecule>Matrix protein p17</molecule>
    <text evidence="1 6">Targets the polyprotein to the plasma membrane via a multipartite membrane-binding signal, that includes its myristoylated N-terminus (By similarity). Matrix protein is part of the pre-integration complex. Implicated in the release from host cell mediated by Vpu. Binds to RNA (By similarity).</text>
</comment>
<comment type="function">
    <molecule>Capsid protein p24</molecule>
    <text evidence="5 6">Forms the conical core that encapsulates the genomic RNA-nucleocapsid complex in the virion. Most core are conical, with only 7% tubular. The core is constituted by capsid protein hexamer subunits. The core is disassembled soon after virion entry (By similarity). The capsid promotes immune invasion by cloaking viral DNA from CGAS detection (By similarity). Host restriction factors such as TRIM5-alpha or TRIMCyp bind retroviral capsids and cause premature capsid disassembly, leading to blocks in reverse transcription. Capsid restriction by TRIM5 is one of the factors which restricts HIV-1 to the human species. Host PIN1 apparently facilitates the virion uncoating (By similarity). On the other hand, interactions with PDZD8 or CYPA stabilize the capsid (By similarity).</text>
</comment>
<comment type="function">
    <molecule>Nucleocapsid protein p7</molecule>
    <text evidence="5">Encapsulates and protects viral dimeric unspliced genomic RNA (gRNA). Binds these RNAs through its zinc fingers. Acts as a nucleic acid chaperone which is involved in rearangement of nucleic acid secondary structure during gRNA retrotranscription. Also facilitates template switch leading to recombination. As part of the polyprotein, participates in gRNA dimerization, packaging, tRNA incorporation and virion assembly.</text>
</comment>
<comment type="function">
    <molecule>p6-gag</molecule>
    <text evidence="6">Plays a role in budding of the assembled particle by interacting with the host class E VPS proteins TSG101 and PDCD6IP/AIP1.</text>
</comment>
<comment type="subunit">
    <molecule>Gag polyprotein</molecule>
    <text evidence="4 5">Homotrimer; further assembles as hexamers of trimers. Oligomerization possibly creates a central hole into which the cytoplasmic tail of the gp41 envelope protein may be inserted. Interacts with host TRIM22; this interaction seems to disrupt proper trafficking of Gag polyprotein and may interfere with budding. Interacts with host PDZD8. When ubiquitinated, interacts (via p6-gag domain) with host PACSIN2; this interaction allows PACSIN2 recruitment to viral assembly sites and its subsequent incorporation into virions. Interacts with MOV10 (By similarity).</text>
</comment>
<comment type="subunit">
    <molecule>Matrix protein p17</molecule>
    <text evidence="5 6">Homotrimer; further assembles as hexamers of trimers. Interacts with gp41 (via C-terminus). Interacts with host CALM1; this interaction induces a conformational change in the Matrix protein, triggering exposure of the myristate group. Interacts with host AP3D1; this interaction allows the polyprotein trafficking to multivesicular bodies during virus assembly. Part of the pre-integration complex (PIC) which is composed of viral genome, matrix protein, Vpr and integrase.</text>
</comment>
<comment type="subunit">
    <molecule>Capsid protein p24</molecule>
    <text evidence="5 6">Homodimer; the homodimer further multimerizes as homohexamers or homopentamers (By similarity). Interacts with host NUP98 (By similarity). Interacts with host PPIA/CYPA; this interaction stabilizes the capsid (By similarity). Interacts with host NUP153 (By similarity). Interacts with host PDZD8; this interaction stabilizes the capsid. Interacts with host TRIM5; this interaction destabilizes the capsid (By similarity). Interacts with host CPSF6 (By similarity). Interacts with host NONO; the interaction is weak (By similarity).</text>
</comment>
<comment type="subunit">
    <molecule>Nucleocapsid protein p7</molecule>
    <text evidence="6">Interacts with host NUP98.</text>
</comment>
<comment type="subunit">
    <molecule>p6-gag</molecule>
    <text evidence="3 6">Interacts with Vpr; this interaction allows Vpr incorporation into the virion. Interacts with host TSG101. p6-gag interacts with host PDCD6IP/AIP1.</text>
</comment>
<comment type="subcellular location">
    <molecule>Gag polyprotein</molecule>
    <subcellularLocation>
        <location evidence="6">Host cell membrane</location>
        <topology evidence="6">Lipid-anchor</topology>
    </subcellularLocation>
    <subcellularLocation>
        <location evidence="6">Host endosome</location>
        <location evidence="6">Host multivesicular body</location>
    </subcellularLocation>
    <text evidence="6">These locations are probably linked to virus assembly sites. The main location is the cell membrane, but under some circumstances, late endosomal compartments can serve as productive sites for virion assembly.</text>
</comment>
<comment type="subcellular location">
    <molecule>Matrix protein p17</molecule>
    <subcellularLocation>
        <location evidence="6">Virion membrane</location>
        <topology evidence="6">Lipid-anchor</topology>
    </subcellularLocation>
    <subcellularLocation>
        <location evidence="1">Host nucleus</location>
    </subcellularLocation>
    <subcellularLocation>
        <location evidence="1">Host cytoplasm</location>
    </subcellularLocation>
</comment>
<comment type="subcellular location">
    <molecule>Capsid protein p24</molecule>
    <subcellularLocation>
        <location evidence="6">Virion</location>
    </subcellularLocation>
</comment>
<comment type="subcellular location">
    <molecule>Nucleocapsid protein p7</molecule>
    <subcellularLocation>
        <location evidence="6">Virion</location>
    </subcellularLocation>
</comment>
<comment type="alternative products">
    <event type="ribosomal frameshifting"/>
    <isoform>
        <id>P20873-1</id>
        <name>Gag polyprotein</name>
        <sequence type="displayed"/>
    </isoform>
    <isoform>
        <id>P20875-1</id>
        <name>Gag-Pol polyprotein</name>
        <sequence type="external"/>
    </isoform>
    <text>Translation results in the formation of the Gag polyprotein most of the time. Ribosomal frameshifting at the gag-pol genes boundary occurs at low frequency and produces the Gag-Pol polyprotein. This strategy of translation probably allows the virus to modulate the quantity of each viral protein. Maintenance of a correct Gag to Gag-Pol ratio is essential for RNA dimerization and viral infectivity.</text>
</comment>
<comment type="domain">
    <text evidence="6">Late-budding domains (L domains) are short sequence motifs essential for viral particle budding. They recruit proteins of the host ESCRT machinery (Endosomal Sorting Complex Required for Transport) or ESCRT-associated proteins. p6-gag contains two L domains: a PTAP/PSAP motif, which interacts with the UEV domain of TSG101 and a LYPX(n)L motif which interacts with PDCD6IP/AIP1.</text>
</comment>
<comment type="PTM">
    <text evidence="6">Gag-Pol polyprotein: Specific enzymatic cleavages by the viral protease yield mature proteins.</text>
</comment>
<comment type="PTM">
    <molecule>Matrix protein p17</molecule>
    <text evidence="5">Tyrosine phosphorylated presumably in the virion by a host kinase. Phosphorylation is apparently not a major regulator of membrane association.</text>
</comment>
<comment type="PTM">
    <text evidence="6">Capsid protein p24 is phosphorylated possibly by host MAPK1; this phosphorylation is necessary for Pin1-mediated virion uncoating.</text>
</comment>
<comment type="PTM">
    <text evidence="2">Nucleocapsid protein p7 is methylated by host PRMT6, impairing its function by reducing RNA annealing and the initiation of reverse transcription.</text>
</comment>
<comment type="miscellaneous">
    <text>HIV-1 lineages are divided in three main groups, M (for Major), O (for Outlier), and N (for New, or Non-M, Non-O). The vast majority of strains found worldwide belong to the group M. Group O seems to be endemic to and largely confined to Cameroon and neighboring countries in West Central Africa, where these viruses represent a small minority of HIV-1 strains. The group N is represented by a limited number of isolates from Cameroonian persons. The group M is further subdivided in 9 clades or subtypes (A to D, F to H, J and K).</text>
</comment>
<comment type="miscellaneous">
    <molecule>Isoform Gag polyprotein</molecule>
    <text>Produced by conventional translation.</text>
</comment>
<comment type="similarity">
    <text evidence="10">Belongs to the primate lentivirus group gag polyprotein family.</text>
</comment>
<name>GAG_HV1JR</name>
<sequence length="504" mass="56484">MGARASVLSGGELDRWEKIRLRPGGKKKYRLKHIVWASRELERFAVNPGLLESSEGCRQILGQLQPSLKTGSEELTSLYNTVATLYCVHQRIEIKDTKEALEKIEEEQTKSMKKAQQAAADTGNSSQVSQNYPIVQNLQGQMVHQAISPRTLNAWVKVIEEKAFSPEVIPMFSALSEGATPQDLNTMLNTVGGHQAAMQMLKETINEEAAEWDRLHPVHAGPIAPGQMREPRGSDIAGTTSTLQEQIGWMTNNPPIPVGEIYKRWIILGLNKIVRMYSPVSILDIRQGPKEPFRDYVDRFYKTLRAEQATQEVKNWMTETLLVQNANPDCKTILKALGPAATLEEMMTACQGVGGPGHKARVLAEAMSQVTNPATIMMQRGNFRNQRKNVKCFNCGKEGHIARNCRAPRKKGCWKCGKEGHQMKECTERQANFLGKIWPSYKGRPGNFLQSRPEPTAPPEESFRFGEETATPSQKQEQKQEPIDKELYPLTSLRSLFGNDPSSQ</sequence>
<organism>
    <name type="scientific">Human immunodeficiency virus type 1 group M subtype B (isolate JRCSF)</name>
    <name type="common">HIV-1</name>
    <dbReference type="NCBI Taxonomy" id="11688"/>
    <lineage>
        <taxon>Viruses</taxon>
        <taxon>Riboviria</taxon>
        <taxon>Pararnavirae</taxon>
        <taxon>Artverviricota</taxon>
        <taxon>Revtraviricetes</taxon>
        <taxon>Ortervirales</taxon>
        <taxon>Retroviridae</taxon>
        <taxon>Orthoretrovirinae</taxon>
        <taxon>Lentivirus</taxon>
        <taxon>Human immunodeficiency virus type 1</taxon>
    </lineage>
</organism>
<accession>P20873</accession>
<reference key="1">
    <citation type="submission" date="1988-12" db="EMBL/GenBank/DDBJ databases">
        <authorList>
            <person name="Koyanagi S."/>
            <person name="Chen I.S.Y."/>
        </authorList>
    </citation>
    <scope>NUCLEOTIDE SEQUENCE [GENOMIC RNA]</scope>
</reference>
<reference key="2">
    <citation type="journal article" date="2003" name="Biochim. Biophys. Acta">
        <title>Role of HIV-1 Gag domains in viral assembly.</title>
        <authorList>
            <person name="Scarlata S."/>
            <person name="Carter C."/>
        </authorList>
    </citation>
    <scope>REVIEW</scope>
</reference>
<protein>
    <recommendedName>
        <fullName>Gag polyprotein</fullName>
    </recommendedName>
    <alternativeName>
        <fullName>Pr55Gag</fullName>
    </alternativeName>
    <component>
        <recommendedName>
            <fullName>Matrix protein p17</fullName>
            <shortName>MA</shortName>
        </recommendedName>
    </component>
    <component>
        <recommendedName>
            <fullName>Capsid protein p24</fullName>
            <shortName>CA</shortName>
        </recommendedName>
    </component>
    <component>
        <recommendedName>
            <fullName evidence="6">Spacer peptide 1</fullName>
            <shortName>SP1</shortName>
        </recommendedName>
        <alternativeName>
            <fullName>p2</fullName>
        </alternativeName>
    </component>
    <component>
        <recommendedName>
            <fullName>Nucleocapsid protein p7</fullName>
            <shortName>NC</shortName>
        </recommendedName>
    </component>
    <component>
        <recommendedName>
            <fullName evidence="6">Spacer peptide 2</fullName>
            <shortName>SP2</shortName>
        </recommendedName>
        <alternativeName>
            <fullName>p1</fullName>
        </alternativeName>
    </component>
    <component>
        <recommendedName>
            <fullName>p6-gag</fullName>
        </recommendedName>
    </component>
</protein>
<gene>
    <name type="primary">gag</name>
</gene>
<keyword id="KW-0014">AIDS</keyword>
<keyword id="KW-0167">Capsid protein</keyword>
<keyword id="KW-1032">Host cell membrane</keyword>
<keyword id="KW-1035">Host cytoplasm</keyword>
<keyword id="KW-1039">Host endosome</keyword>
<keyword id="KW-1043">Host membrane</keyword>
<keyword id="KW-1048">Host nucleus</keyword>
<keyword id="KW-0945">Host-virus interaction</keyword>
<keyword id="KW-0449">Lipoprotein</keyword>
<keyword id="KW-0472">Membrane</keyword>
<keyword id="KW-0479">Metal-binding</keyword>
<keyword id="KW-0488">Methylation</keyword>
<keyword id="KW-0519">Myristate</keyword>
<keyword id="KW-0597">Phosphoprotein</keyword>
<keyword id="KW-0677">Repeat</keyword>
<keyword id="KW-0688">Ribosomal frameshifting</keyword>
<keyword id="KW-0694">RNA-binding</keyword>
<keyword id="KW-1198">Viral budding</keyword>
<keyword id="KW-1187">Viral budding via the host ESCRT complexes</keyword>
<keyword id="KW-0543">Viral nucleoprotein</keyword>
<keyword id="KW-1188">Viral release from host cell</keyword>
<keyword id="KW-0946">Virion</keyword>
<keyword id="KW-0862">Zinc</keyword>
<keyword id="KW-0863">Zinc-finger</keyword>
<proteinExistence type="inferred from homology"/>
<organismHost>
    <name type="scientific">Homo sapiens</name>
    <name type="common">Human</name>
    <dbReference type="NCBI Taxonomy" id="9606"/>
</organismHost>
<dbReference type="EMBL" id="M38429">
    <property type="protein sequence ID" value="AAB03744.1"/>
    <property type="molecule type" value="Genomic_RNA"/>
</dbReference>
<dbReference type="SMR" id="P20873"/>
<dbReference type="PRO" id="PR:P20873"/>
<dbReference type="Proteomes" id="UP000007695">
    <property type="component" value="Genome"/>
</dbReference>
<dbReference type="GO" id="GO:0042025">
    <property type="term" value="C:host cell nucleus"/>
    <property type="evidence" value="ECO:0007669"/>
    <property type="project" value="UniProtKB-SubCell"/>
</dbReference>
<dbReference type="GO" id="GO:0020002">
    <property type="term" value="C:host cell plasma membrane"/>
    <property type="evidence" value="ECO:0007669"/>
    <property type="project" value="UniProtKB-SubCell"/>
</dbReference>
<dbReference type="GO" id="GO:0072494">
    <property type="term" value="C:host multivesicular body"/>
    <property type="evidence" value="ECO:0007669"/>
    <property type="project" value="UniProtKB-SubCell"/>
</dbReference>
<dbReference type="GO" id="GO:0016020">
    <property type="term" value="C:membrane"/>
    <property type="evidence" value="ECO:0007669"/>
    <property type="project" value="UniProtKB-KW"/>
</dbReference>
<dbReference type="GO" id="GO:0019013">
    <property type="term" value="C:viral nucleocapsid"/>
    <property type="evidence" value="ECO:0007669"/>
    <property type="project" value="UniProtKB-KW"/>
</dbReference>
<dbReference type="GO" id="GO:0055036">
    <property type="term" value="C:virion membrane"/>
    <property type="evidence" value="ECO:0007669"/>
    <property type="project" value="UniProtKB-SubCell"/>
</dbReference>
<dbReference type="GO" id="GO:0003723">
    <property type="term" value="F:RNA binding"/>
    <property type="evidence" value="ECO:0007669"/>
    <property type="project" value="UniProtKB-KW"/>
</dbReference>
<dbReference type="GO" id="GO:0005198">
    <property type="term" value="F:structural molecule activity"/>
    <property type="evidence" value="ECO:0007669"/>
    <property type="project" value="InterPro"/>
</dbReference>
<dbReference type="GO" id="GO:0008270">
    <property type="term" value="F:zinc ion binding"/>
    <property type="evidence" value="ECO:0007669"/>
    <property type="project" value="UniProtKB-KW"/>
</dbReference>
<dbReference type="GO" id="GO:0039702">
    <property type="term" value="P:viral budding via host ESCRT complex"/>
    <property type="evidence" value="ECO:0007669"/>
    <property type="project" value="UniProtKB-KW"/>
</dbReference>
<dbReference type="GO" id="GO:0075523">
    <property type="term" value="P:viral translational frameshifting"/>
    <property type="evidence" value="ECO:0007669"/>
    <property type="project" value="UniProtKB-KW"/>
</dbReference>
<dbReference type="FunFam" id="1.10.1200.30:FF:000001">
    <property type="entry name" value="Gag polyprotein"/>
    <property type="match status" value="1"/>
</dbReference>
<dbReference type="FunFam" id="1.10.150.90:FF:000001">
    <property type="entry name" value="Gag polyprotein"/>
    <property type="match status" value="1"/>
</dbReference>
<dbReference type="FunFam" id="1.10.375.10:FF:000001">
    <property type="entry name" value="Gag polyprotein"/>
    <property type="match status" value="1"/>
</dbReference>
<dbReference type="FunFam" id="1.20.5.760:FF:000001">
    <property type="entry name" value="Gag polyprotein"/>
    <property type="match status" value="1"/>
</dbReference>
<dbReference type="FunFam" id="4.10.60.10:FF:000001">
    <property type="entry name" value="Gag polyprotein"/>
    <property type="match status" value="1"/>
</dbReference>
<dbReference type="Gene3D" id="1.10.1200.30">
    <property type="match status" value="1"/>
</dbReference>
<dbReference type="Gene3D" id="6.10.250.390">
    <property type="match status" value="1"/>
</dbReference>
<dbReference type="Gene3D" id="1.10.375.10">
    <property type="entry name" value="Human Immunodeficiency Virus Type 1 Capsid Protein"/>
    <property type="match status" value="1"/>
</dbReference>
<dbReference type="Gene3D" id="1.10.150.90">
    <property type="entry name" value="Immunodeficiency lentiviruses, gag gene matrix protein p17"/>
    <property type="match status" value="1"/>
</dbReference>
<dbReference type="Gene3D" id="1.20.5.760">
    <property type="entry name" value="Single helix bin"/>
    <property type="match status" value="1"/>
</dbReference>
<dbReference type="Gene3D" id="4.10.60.10">
    <property type="entry name" value="Zinc finger, CCHC-type"/>
    <property type="match status" value="1"/>
</dbReference>
<dbReference type="InterPro" id="IPR045345">
    <property type="entry name" value="Gag_p24_C"/>
</dbReference>
<dbReference type="InterPro" id="IPR014817">
    <property type="entry name" value="Gag_p6"/>
</dbReference>
<dbReference type="InterPro" id="IPR000071">
    <property type="entry name" value="Lentvrl_matrix_N"/>
</dbReference>
<dbReference type="InterPro" id="IPR012344">
    <property type="entry name" value="Matrix_HIV/RSV_N"/>
</dbReference>
<dbReference type="InterPro" id="IPR050195">
    <property type="entry name" value="Primate_lentivir_Gag_pol-like"/>
</dbReference>
<dbReference type="InterPro" id="IPR008916">
    <property type="entry name" value="Retrov_capsid_C"/>
</dbReference>
<dbReference type="InterPro" id="IPR008919">
    <property type="entry name" value="Retrov_capsid_N"/>
</dbReference>
<dbReference type="InterPro" id="IPR010999">
    <property type="entry name" value="Retrovr_matrix"/>
</dbReference>
<dbReference type="InterPro" id="IPR001878">
    <property type="entry name" value="Znf_CCHC"/>
</dbReference>
<dbReference type="InterPro" id="IPR036875">
    <property type="entry name" value="Znf_CCHC_sf"/>
</dbReference>
<dbReference type="PANTHER" id="PTHR40389:SF4">
    <property type="match status" value="1"/>
</dbReference>
<dbReference type="PANTHER" id="PTHR40389">
    <property type="entry name" value="ENDOGENOUS RETROVIRUS GROUP K MEMBER 24 GAG POLYPROTEIN-RELATED"/>
    <property type="match status" value="1"/>
</dbReference>
<dbReference type="Pfam" id="PF00540">
    <property type="entry name" value="Gag_p17"/>
    <property type="match status" value="1"/>
</dbReference>
<dbReference type="Pfam" id="PF19317">
    <property type="entry name" value="Gag_p24_C"/>
    <property type="match status" value="1"/>
</dbReference>
<dbReference type="Pfam" id="PF08705">
    <property type="entry name" value="Gag_p6"/>
    <property type="match status" value="1"/>
</dbReference>
<dbReference type="Pfam" id="PF00098">
    <property type="entry name" value="zf-CCHC"/>
    <property type="match status" value="2"/>
</dbReference>
<dbReference type="PRINTS" id="PR00234">
    <property type="entry name" value="HIV1MATRIX"/>
</dbReference>
<dbReference type="SMART" id="SM00343">
    <property type="entry name" value="ZnF_C2HC"/>
    <property type="match status" value="2"/>
</dbReference>
<dbReference type="SUPFAM" id="SSF47836">
    <property type="entry name" value="Retroviral matrix proteins"/>
    <property type="match status" value="1"/>
</dbReference>
<dbReference type="SUPFAM" id="SSF47353">
    <property type="entry name" value="Retrovirus capsid dimerization domain-like"/>
    <property type="match status" value="1"/>
</dbReference>
<dbReference type="SUPFAM" id="SSF47943">
    <property type="entry name" value="Retrovirus capsid protein, N-terminal core domain"/>
    <property type="match status" value="1"/>
</dbReference>
<dbReference type="SUPFAM" id="SSF57756">
    <property type="entry name" value="Retrovirus zinc finger-like domains"/>
    <property type="match status" value="1"/>
</dbReference>
<dbReference type="PROSITE" id="PS50158">
    <property type="entry name" value="ZF_CCHC"/>
    <property type="match status" value="2"/>
</dbReference>
<feature type="initiator methionine" description="Removed; by host" evidence="1">
    <location>
        <position position="1"/>
    </location>
</feature>
<feature type="chain" id="PRO_0000261218" description="Gag polyprotein">
    <location>
        <begin position="2"/>
        <end position="504"/>
    </location>
</feature>
<feature type="chain" id="PRO_0000038523" description="Matrix protein p17" evidence="1">
    <location>
        <begin position="2"/>
        <end position="132"/>
    </location>
</feature>
<feature type="chain" id="PRO_0000038524" description="Capsid protein p24" evidence="1">
    <location>
        <begin position="133"/>
        <end position="363"/>
    </location>
</feature>
<feature type="peptide" id="PRO_0000038525" description="Spacer peptide 1" evidence="1">
    <location>
        <begin position="364"/>
        <end position="377"/>
    </location>
</feature>
<feature type="chain" id="PRO_0000038526" description="Nucleocapsid protein p7" evidence="1">
    <location>
        <begin position="378"/>
        <end position="432"/>
    </location>
</feature>
<feature type="peptide" id="PRO_0000038527" description="Spacer peptide 2" evidence="1">
    <location>
        <begin position="433"/>
        <end position="448"/>
    </location>
</feature>
<feature type="chain" id="PRO_0000038528" description="p6-gag" evidence="1">
    <location>
        <begin position="449"/>
        <end position="504"/>
    </location>
</feature>
<feature type="zinc finger region" description="CCHC-type 1" evidence="8">
    <location>
        <begin position="390"/>
        <end position="407"/>
    </location>
</feature>
<feature type="zinc finger region" description="CCHC-type 2" evidence="8">
    <location>
        <begin position="411"/>
        <end position="428"/>
    </location>
</feature>
<feature type="region of interest" description="Interaction with Gp41" evidence="6">
    <location>
        <begin position="7"/>
        <end position="31"/>
    </location>
</feature>
<feature type="region of interest" description="Interaction with host CALM1" evidence="5">
    <location>
        <begin position="8"/>
        <end position="43"/>
    </location>
</feature>
<feature type="region of interest" description="Interaction with host AP3D1" evidence="7">
    <location>
        <begin position="12"/>
        <end position="19"/>
    </location>
</feature>
<feature type="region of interest" description="Interaction with membrane phosphatidylinositol 4,5-bisphosphate and RNA" evidence="6">
    <location>
        <begin position="14"/>
        <end position="33"/>
    </location>
</feature>
<feature type="region of interest" description="Interaction with membrane phosphatidylinositol 4,5-bisphosphate" evidence="6">
    <location>
        <begin position="73"/>
        <end position="77"/>
    </location>
</feature>
<feature type="region of interest" description="Disordered" evidence="9">
    <location>
        <begin position="106"/>
        <end position="128"/>
    </location>
</feature>
<feature type="region of interest" description="Interaction with host PPIA/CYPA and NUP153" evidence="6">
    <location>
        <begin position="189"/>
        <end position="227"/>
    </location>
</feature>
<feature type="region of interest" description="PPIA/CYPA-binding loop" evidence="5">
    <location>
        <begin position="217"/>
        <end position="225"/>
    </location>
</feature>
<feature type="region of interest" description="Dimerization/Multimerization of capsid protein p24" evidence="5">
    <location>
        <begin position="277"/>
        <end position="363"/>
    </location>
</feature>
<feature type="region of interest" description="Disordered" evidence="9">
    <location>
        <begin position="444"/>
        <end position="504"/>
    </location>
</feature>
<feature type="short sequence motif" description="Nuclear export signal" evidence="1">
    <location>
        <begin position="16"/>
        <end position="22"/>
    </location>
</feature>
<feature type="short sequence motif" description="Nuclear localization signal" evidence="1">
    <location>
        <begin position="26"/>
        <end position="32"/>
    </location>
</feature>
<feature type="short sequence motif" description="PTAP/PSAP motif">
    <location>
        <begin position="455"/>
        <end position="458"/>
    </location>
</feature>
<feature type="short sequence motif" description="LYPX(n)L motif">
    <location>
        <begin position="487"/>
        <end position="496"/>
    </location>
</feature>
<feature type="compositionally biased region" description="Basic and acidic residues" evidence="9">
    <location>
        <begin position="476"/>
        <end position="487"/>
    </location>
</feature>
<feature type="site" description="Cleavage; by viral protease" evidence="1">
    <location>
        <begin position="132"/>
        <end position="133"/>
    </location>
</feature>
<feature type="site" description="Cleavage; by viral protease" evidence="1">
    <location>
        <begin position="363"/>
        <end position="364"/>
    </location>
</feature>
<feature type="site" description="Cleavage; by viral protease" evidence="1">
    <location>
        <begin position="377"/>
        <end position="378"/>
    </location>
</feature>
<feature type="site" description="Cleavage; by viral protease" evidence="1">
    <location>
        <begin position="432"/>
        <end position="433"/>
    </location>
</feature>
<feature type="site" description="Cleavage; by viral protease" evidence="1">
    <location>
        <begin position="448"/>
        <end position="449"/>
    </location>
</feature>
<feature type="modified residue" description="Phosphoserine; by host MAPK1" evidence="6">
    <location>
        <position position="148"/>
    </location>
</feature>
<feature type="modified residue" description="Asymmetric dimethylarginine; in Nucleocapsid protein p7; by host PRMT6" evidence="1">
    <location>
        <position position="387"/>
    </location>
</feature>
<feature type="modified residue" description="Asymmetric dimethylarginine; in Nucleocapsid protein p7; by host PRMT6" evidence="1">
    <location>
        <position position="409"/>
    </location>
</feature>
<feature type="lipid moiety-binding region" description="N-myristoyl glycine; by host" evidence="1">
    <location>
        <position position="2"/>
    </location>
</feature>
<evidence type="ECO:0000250" key="1"/>
<evidence type="ECO:0000250" key="2">
    <source>
        <dbReference type="UniProtKB" id="P03347"/>
    </source>
</evidence>
<evidence type="ECO:0000250" key="3">
    <source>
        <dbReference type="UniProtKB" id="P03348"/>
    </source>
</evidence>
<evidence type="ECO:0000250" key="4">
    <source>
        <dbReference type="UniProtKB" id="P03349"/>
    </source>
</evidence>
<evidence type="ECO:0000250" key="5">
    <source>
        <dbReference type="UniProtKB" id="P04591"/>
    </source>
</evidence>
<evidence type="ECO:0000250" key="6">
    <source>
        <dbReference type="UniProtKB" id="P12493"/>
    </source>
</evidence>
<evidence type="ECO:0000250" key="7">
    <source>
        <dbReference type="UniProtKB" id="P12497"/>
    </source>
</evidence>
<evidence type="ECO:0000255" key="8">
    <source>
        <dbReference type="PROSITE-ProRule" id="PRU00047"/>
    </source>
</evidence>
<evidence type="ECO:0000256" key="9">
    <source>
        <dbReference type="SAM" id="MobiDB-lite"/>
    </source>
</evidence>
<evidence type="ECO:0000305" key="10"/>